<keyword id="KW-1185">Reference proteome</keyword>
<proteinExistence type="inferred from homology"/>
<organism>
    <name type="scientific">Caenorhabditis briggsae</name>
    <dbReference type="NCBI Taxonomy" id="6238"/>
    <lineage>
        <taxon>Eukaryota</taxon>
        <taxon>Metazoa</taxon>
        <taxon>Ecdysozoa</taxon>
        <taxon>Nematoda</taxon>
        <taxon>Chromadorea</taxon>
        <taxon>Rhabditida</taxon>
        <taxon>Rhabditina</taxon>
        <taxon>Rhabditomorpha</taxon>
        <taxon>Rhabditoidea</taxon>
        <taxon>Rhabditidae</taxon>
        <taxon>Peloderinae</taxon>
        <taxon>Caenorhabditis</taxon>
    </lineage>
</organism>
<feature type="chain" id="PRO_0000121033" description="PCI domain-containing protein 2 homolog">
    <location>
        <begin position="1"/>
        <end position="413"/>
    </location>
</feature>
<feature type="domain" description="PCI" evidence="1">
    <location>
        <begin position="222"/>
        <end position="403"/>
    </location>
</feature>
<reference key="1">
    <citation type="journal article" date="2003" name="PLoS Biol.">
        <title>The genome sequence of Caenorhabditis briggsae: a platform for comparative genomics.</title>
        <authorList>
            <person name="Stein L.D."/>
            <person name="Bao Z."/>
            <person name="Blasiar D."/>
            <person name="Blumenthal T."/>
            <person name="Brent M.R."/>
            <person name="Chen N."/>
            <person name="Chinwalla A."/>
            <person name="Clarke L."/>
            <person name="Clee C."/>
            <person name="Coghlan A."/>
            <person name="Coulson A."/>
            <person name="D'Eustachio P."/>
            <person name="Fitch D.H.A."/>
            <person name="Fulton L.A."/>
            <person name="Fulton R.E."/>
            <person name="Griffiths-Jones S."/>
            <person name="Harris T.W."/>
            <person name="Hillier L.W."/>
            <person name="Kamath R."/>
            <person name="Kuwabara P.E."/>
            <person name="Mardis E.R."/>
            <person name="Marra M.A."/>
            <person name="Miner T.L."/>
            <person name="Minx P."/>
            <person name="Mullikin J.C."/>
            <person name="Plumb R.W."/>
            <person name="Rogers J."/>
            <person name="Schein J.E."/>
            <person name="Sohrmann M."/>
            <person name="Spieth J."/>
            <person name="Stajich J.E."/>
            <person name="Wei C."/>
            <person name="Willey D."/>
            <person name="Wilson R.K."/>
            <person name="Durbin R.M."/>
            <person name="Waterston R.H."/>
        </authorList>
    </citation>
    <scope>NUCLEOTIDE SEQUENCE [LARGE SCALE GENOMIC DNA]</scope>
    <source>
        <strain>AF16</strain>
    </source>
</reference>
<dbReference type="EMBL" id="HE600936">
    <property type="protein sequence ID" value="CAP35701.1"/>
    <property type="molecule type" value="Genomic_DNA"/>
</dbReference>
<dbReference type="RefSeq" id="XP_002642232.1">
    <property type="nucleotide sequence ID" value="XM_002642186.1"/>
</dbReference>
<dbReference type="SMR" id="Q60YJ7"/>
<dbReference type="FunCoup" id="Q60YJ7">
    <property type="interactions" value="2602"/>
</dbReference>
<dbReference type="STRING" id="6238.Q60YJ7"/>
<dbReference type="EnsemblMetazoa" id="CBG18211.1">
    <property type="protein sequence ID" value="CBG18211.1"/>
    <property type="gene ID" value="WBGene00037671"/>
</dbReference>
<dbReference type="GeneID" id="8584228"/>
<dbReference type="KEGG" id="cbr:CBG_18211"/>
<dbReference type="CTD" id="8584228"/>
<dbReference type="WormBase" id="CBG18211">
    <property type="protein sequence ID" value="CBP19247"/>
    <property type="gene ID" value="WBGene00037671"/>
</dbReference>
<dbReference type="eggNOG" id="KOG2688">
    <property type="taxonomic scope" value="Eukaryota"/>
</dbReference>
<dbReference type="HOGENOM" id="CLU_031567_2_0_1"/>
<dbReference type="InParanoid" id="Q60YJ7"/>
<dbReference type="OMA" id="INRMFTL"/>
<dbReference type="OrthoDB" id="10252687at2759"/>
<dbReference type="Proteomes" id="UP000008549">
    <property type="component" value="Unassembled WGS sequence"/>
</dbReference>
<dbReference type="GO" id="GO:0070390">
    <property type="term" value="C:transcription export complex 2"/>
    <property type="evidence" value="ECO:0000318"/>
    <property type="project" value="GO_Central"/>
</dbReference>
<dbReference type="GO" id="GO:0003690">
    <property type="term" value="F:double-stranded DNA binding"/>
    <property type="evidence" value="ECO:0000318"/>
    <property type="project" value="GO_Central"/>
</dbReference>
<dbReference type="GO" id="GO:0003723">
    <property type="term" value="F:RNA binding"/>
    <property type="evidence" value="ECO:0000318"/>
    <property type="project" value="GO_Central"/>
</dbReference>
<dbReference type="GO" id="GO:0016973">
    <property type="term" value="P:poly(A)+ mRNA export from nucleus"/>
    <property type="evidence" value="ECO:0000318"/>
    <property type="project" value="GO_Central"/>
</dbReference>
<dbReference type="GO" id="GO:0000973">
    <property type="term" value="P:post-transcriptional tethering of RNA polymerase II gene DNA at nuclear periphery"/>
    <property type="evidence" value="ECO:0000318"/>
    <property type="project" value="GO_Central"/>
</dbReference>
<dbReference type="GO" id="GO:0006368">
    <property type="term" value="P:transcription elongation by RNA polymerase II"/>
    <property type="evidence" value="ECO:0000318"/>
    <property type="project" value="GO_Central"/>
</dbReference>
<dbReference type="FunFam" id="1.10.10.10:FF:000146">
    <property type="entry name" value="PCI domain-containing protein 2 homolog"/>
    <property type="match status" value="1"/>
</dbReference>
<dbReference type="Gene3D" id="1.10.10.10">
    <property type="entry name" value="Winged helix-like DNA-binding domain superfamily/Winged helix DNA-binding domain"/>
    <property type="match status" value="1"/>
</dbReference>
<dbReference type="InterPro" id="IPR045114">
    <property type="entry name" value="Csn12-like"/>
</dbReference>
<dbReference type="InterPro" id="IPR000717">
    <property type="entry name" value="PCI_dom"/>
</dbReference>
<dbReference type="InterPro" id="IPR036388">
    <property type="entry name" value="WH-like_DNA-bd_sf"/>
</dbReference>
<dbReference type="PANTHER" id="PTHR12732:SF0">
    <property type="entry name" value="PCI DOMAIN-CONTAINING PROTEIN 2"/>
    <property type="match status" value="1"/>
</dbReference>
<dbReference type="PANTHER" id="PTHR12732">
    <property type="entry name" value="UNCHARACTERIZED PROTEASOME COMPONENT REGION PCI-CONTAINING"/>
    <property type="match status" value="1"/>
</dbReference>
<dbReference type="Pfam" id="PF01399">
    <property type="entry name" value="PCI"/>
    <property type="match status" value="1"/>
</dbReference>
<dbReference type="SMART" id="SM00753">
    <property type="entry name" value="PAM"/>
    <property type="match status" value="1"/>
</dbReference>
<dbReference type="PROSITE" id="PS50250">
    <property type="entry name" value="PCI"/>
    <property type="match status" value="1"/>
</dbReference>
<accession>Q60YJ7</accession>
<accession>A8XS59</accession>
<comment type="similarity">
    <text evidence="2">Belongs to the CSN12 family.</text>
</comment>
<evidence type="ECO:0000255" key="1">
    <source>
        <dbReference type="PROSITE-ProRule" id="PRU01185"/>
    </source>
</evidence>
<evidence type="ECO:0000305" key="2"/>
<sequence>MSFVRNISDYFNKIDNLCYNQSWESGDKIAKYLSLNDDHSKEAYLHISEYGSTSRRCRVSEDEIIDEIVCLHLHVLHSVHVAKDLISSQSTQIRIIQLFNKEILQKRKDENWFLPIFYRLCTDLRWLSKGAESCASGDDEGDSNANSFFESAAKAITECYRTCVSDVHAEEGKTKKVAMLNMTNQLFQIYFQINKLNLLKPLIRAIDNCGPLYNKFLMADKVAYNYFLGRKALFDGDLILAEKGLVYAFRNCPTESVSNKRKILVYLIPVKMFLGHMPTASLLHRYRLDEFQEVVAAVKDGHLGRVDNALLTNGEFFIKCGIYLVLEKLRTITYRNLFKKVSQMVGKVQIPLDAFQAALRFVGVTDVDMDELECIIANLIAEKKVKGYLAHQHQKLVISKTNAFPTLSSVSSN</sequence>
<gene>
    <name type="ORF">CBG18211</name>
</gene>
<name>PCID2_CAEBR</name>
<protein>
    <recommendedName>
        <fullName>PCI domain-containing protein 2 homolog</fullName>
    </recommendedName>
    <alternativeName>
        <fullName>CSN12-like protein</fullName>
    </alternativeName>
</protein>